<feature type="chain" id="PRO_0000288280" description="Isocitrate dehydrogenase kinase/phosphatase">
    <location>
        <begin position="1"/>
        <end position="586"/>
    </location>
</feature>
<feature type="active site" evidence="1">
    <location>
        <position position="372"/>
    </location>
</feature>
<feature type="binding site" evidence="1">
    <location>
        <begin position="316"/>
        <end position="322"/>
    </location>
    <ligand>
        <name>ATP</name>
        <dbReference type="ChEBI" id="CHEBI:30616"/>
    </ligand>
</feature>
<feature type="binding site" evidence="1">
    <location>
        <position position="337"/>
    </location>
    <ligand>
        <name>ATP</name>
        <dbReference type="ChEBI" id="CHEBI:30616"/>
    </ligand>
</feature>
<keyword id="KW-0067">ATP-binding</keyword>
<keyword id="KW-0963">Cytoplasm</keyword>
<keyword id="KW-0329">Glyoxylate bypass</keyword>
<keyword id="KW-0378">Hydrolase</keyword>
<keyword id="KW-0418">Kinase</keyword>
<keyword id="KW-0547">Nucleotide-binding</keyword>
<keyword id="KW-0904">Protein phosphatase</keyword>
<keyword id="KW-1185">Reference proteome</keyword>
<keyword id="KW-0723">Serine/threonine-protein kinase</keyword>
<keyword id="KW-0808">Transferase</keyword>
<keyword id="KW-0816">Tricarboxylic acid cycle</keyword>
<reference key="1">
    <citation type="submission" date="2006-01" db="EMBL/GenBank/DDBJ databases">
        <title>Complete sequence of Anaeromyxobacter dehalogenans 2CP-C.</title>
        <authorList>
            <person name="Copeland A."/>
            <person name="Lucas S."/>
            <person name="Lapidus A."/>
            <person name="Barry K."/>
            <person name="Detter J.C."/>
            <person name="Glavina T."/>
            <person name="Hammon N."/>
            <person name="Israni S."/>
            <person name="Pitluck S."/>
            <person name="Brettin T."/>
            <person name="Bruce D."/>
            <person name="Han C."/>
            <person name="Tapia R."/>
            <person name="Gilna P."/>
            <person name="Kiss H."/>
            <person name="Schmutz J."/>
            <person name="Larimer F."/>
            <person name="Land M."/>
            <person name="Kyrpides N."/>
            <person name="Anderson I."/>
            <person name="Sanford R.A."/>
            <person name="Ritalahti K.M."/>
            <person name="Thomas H.S."/>
            <person name="Kirby J.R."/>
            <person name="Zhulin I.B."/>
            <person name="Loeffler F.E."/>
            <person name="Richardson P."/>
        </authorList>
    </citation>
    <scope>NUCLEOTIDE SEQUENCE [LARGE SCALE GENOMIC DNA]</scope>
    <source>
        <strain>2CP-C</strain>
    </source>
</reference>
<name>ACEK_ANADE</name>
<gene>
    <name evidence="1" type="primary">aceK</name>
    <name type="ordered locus">Adeh_2039</name>
</gene>
<dbReference type="EC" id="2.7.11.5" evidence="1"/>
<dbReference type="EC" id="3.1.3.-" evidence="1"/>
<dbReference type="EMBL" id="CP000251">
    <property type="protein sequence ID" value="ABC81809.1"/>
    <property type="molecule type" value="Genomic_DNA"/>
</dbReference>
<dbReference type="RefSeq" id="WP_011421091.1">
    <property type="nucleotide sequence ID" value="NC_007760.1"/>
</dbReference>
<dbReference type="SMR" id="Q2IJI0"/>
<dbReference type="STRING" id="290397.Adeh_2039"/>
<dbReference type="KEGG" id="ade:Adeh_2039"/>
<dbReference type="eggNOG" id="COG4579">
    <property type="taxonomic scope" value="Bacteria"/>
</dbReference>
<dbReference type="HOGENOM" id="CLU_033804_1_1_7"/>
<dbReference type="OrthoDB" id="5287793at2"/>
<dbReference type="Proteomes" id="UP000001935">
    <property type="component" value="Chromosome"/>
</dbReference>
<dbReference type="GO" id="GO:0005737">
    <property type="term" value="C:cytoplasm"/>
    <property type="evidence" value="ECO:0007669"/>
    <property type="project" value="UniProtKB-SubCell"/>
</dbReference>
<dbReference type="GO" id="GO:0008772">
    <property type="term" value="F:[isocitrate dehydrogenase (NADP+)] kinase activity"/>
    <property type="evidence" value="ECO:0007669"/>
    <property type="project" value="UniProtKB-EC"/>
</dbReference>
<dbReference type="GO" id="GO:0016208">
    <property type="term" value="F:AMP binding"/>
    <property type="evidence" value="ECO:0007669"/>
    <property type="project" value="TreeGrafter"/>
</dbReference>
<dbReference type="GO" id="GO:0005524">
    <property type="term" value="F:ATP binding"/>
    <property type="evidence" value="ECO:0007669"/>
    <property type="project" value="UniProtKB-KW"/>
</dbReference>
<dbReference type="GO" id="GO:0004721">
    <property type="term" value="F:phosphoprotein phosphatase activity"/>
    <property type="evidence" value="ECO:0007669"/>
    <property type="project" value="UniProtKB-KW"/>
</dbReference>
<dbReference type="GO" id="GO:0004674">
    <property type="term" value="F:protein serine/threonine kinase activity"/>
    <property type="evidence" value="ECO:0007669"/>
    <property type="project" value="UniProtKB-KW"/>
</dbReference>
<dbReference type="GO" id="GO:0006006">
    <property type="term" value="P:glucose metabolic process"/>
    <property type="evidence" value="ECO:0007669"/>
    <property type="project" value="InterPro"/>
</dbReference>
<dbReference type="GO" id="GO:0006097">
    <property type="term" value="P:glyoxylate cycle"/>
    <property type="evidence" value="ECO:0007669"/>
    <property type="project" value="UniProtKB-KW"/>
</dbReference>
<dbReference type="GO" id="GO:0006099">
    <property type="term" value="P:tricarboxylic acid cycle"/>
    <property type="evidence" value="ECO:0007669"/>
    <property type="project" value="UniProtKB-KW"/>
</dbReference>
<dbReference type="HAMAP" id="MF_00747">
    <property type="entry name" value="AceK"/>
    <property type="match status" value="1"/>
</dbReference>
<dbReference type="InterPro" id="IPR046855">
    <property type="entry name" value="AceK_kinase"/>
</dbReference>
<dbReference type="InterPro" id="IPR046854">
    <property type="entry name" value="AceK_regulatory"/>
</dbReference>
<dbReference type="InterPro" id="IPR010452">
    <property type="entry name" value="Isocitrate_DH_AceK"/>
</dbReference>
<dbReference type="NCBIfam" id="NF002804">
    <property type="entry name" value="PRK02946.1"/>
    <property type="match status" value="1"/>
</dbReference>
<dbReference type="PANTHER" id="PTHR39559">
    <property type="match status" value="1"/>
</dbReference>
<dbReference type="PANTHER" id="PTHR39559:SF1">
    <property type="entry name" value="ISOCITRATE DEHYDROGENASE KINASE_PHOSPHATASE"/>
    <property type="match status" value="1"/>
</dbReference>
<dbReference type="Pfam" id="PF06315">
    <property type="entry name" value="AceK_kinase"/>
    <property type="match status" value="1"/>
</dbReference>
<dbReference type="Pfam" id="PF20423">
    <property type="entry name" value="AceK_regulatory"/>
    <property type="match status" value="1"/>
</dbReference>
<dbReference type="PIRSF" id="PIRSF000719">
    <property type="entry name" value="AceK"/>
    <property type="match status" value="1"/>
</dbReference>
<comment type="function">
    <text evidence="1">Bifunctional enzyme which can phosphorylate or dephosphorylate isocitrate dehydrogenase (IDH) on a specific serine residue. This is a regulatory mechanism which enables bacteria to bypass the Krebs cycle via the glyoxylate shunt in response to the source of carbon. When bacteria are grown on glucose, IDH is fully active and unphosphorylated, but when grown on acetate or ethanol, the activity of IDH declines drastically concomitant with its phosphorylation.</text>
</comment>
<comment type="catalytic activity">
    <reaction evidence="1">
        <text>L-seryl-[isocitrate dehydrogenase] + ATP = O-phospho-L-seryl-[isocitrate dehydrogenase] + ADP + H(+)</text>
        <dbReference type="Rhea" id="RHEA:43540"/>
        <dbReference type="Rhea" id="RHEA-COMP:10605"/>
        <dbReference type="Rhea" id="RHEA-COMP:10606"/>
        <dbReference type="ChEBI" id="CHEBI:15378"/>
        <dbReference type="ChEBI" id="CHEBI:29999"/>
        <dbReference type="ChEBI" id="CHEBI:30616"/>
        <dbReference type="ChEBI" id="CHEBI:83421"/>
        <dbReference type="ChEBI" id="CHEBI:456216"/>
        <dbReference type="EC" id="2.7.11.5"/>
    </reaction>
</comment>
<comment type="subcellular location">
    <subcellularLocation>
        <location evidence="1">Cytoplasm</location>
    </subcellularLocation>
</comment>
<comment type="similarity">
    <text evidence="1">Belongs to the AceK family.</text>
</comment>
<sequence length="586" mass="65597">MLDERGALARGAAEAIRAGYEAYQAERARITARARGRFEARDWAGAQRDARERLDLRDGVVHRTVGEVRAELGGAVQDREVWRRAKEAFEAVAAARPDAEIAGSFFNSVTRRVLTTVGVDPAIEFLAADAPPPREDPPQHRAFAREATTEALLARILRAAPISAPFEDLARDARLAALELDAHVRGLPDRQPIDAVELARPVFYRGKGAYLVGRIRRGRHLTPLVLALAHGDRGVALDAVLFTEEDVSIVFGFTRSYFHVALERPRAMVAFLSTLLPLKRRSELYTGLGYHKHGKAELYREVAQHLAEGDDRFVPARGDRGLVMCVFTLPGLDVIFKVIRDRFAPPKQTTRREVMDRYRHVFRHDRAGRLVDAQEYEHLAFPAARFSPALLEELRTECGDGVRVAGGEVAIRHLYAERRVTPLNLFVREADEWTARQAVLDFGCALRDLAATDTFPGDLLLKNFGVTRHGRVIFYDYDELTRVTDCNFRDLPGAGPGDGDDGWGGGPDAGYDGGDPPFYVGPADVFPEELLPFLGLTGRLREVFLRAHGELLTGRWWRDIQARLRAGEIVDIFPYREEQRLRHAHP</sequence>
<organism>
    <name type="scientific">Anaeromyxobacter dehalogenans (strain 2CP-C)</name>
    <dbReference type="NCBI Taxonomy" id="290397"/>
    <lineage>
        <taxon>Bacteria</taxon>
        <taxon>Pseudomonadati</taxon>
        <taxon>Myxococcota</taxon>
        <taxon>Myxococcia</taxon>
        <taxon>Myxococcales</taxon>
        <taxon>Cystobacterineae</taxon>
        <taxon>Anaeromyxobacteraceae</taxon>
        <taxon>Anaeromyxobacter</taxon>
    </lineage>
</organism>
<protein>
    <recommendedName>
        <fullName evidence="1">Isocitrate dehydrogenase kinase/phosphatase</fullName>
        <shortName evidence="1">IDH kinase/phosphatase</shortName>
        <shortName evidence="1">IDHK/P</shortName>
        <ecNumber evidence="1">2.7.11.5</ecNumber>
        <ecNumber evidence="1">3.1.3.-</ecNumber>
    </recommendedName>
</protein>
<evidence type="ECO:0000255" key="1">
    <source>
        <dbReference type="HAMAP-Rule" id="MF_00747"/>
    </source>
</evidence>
<proteinExistence type="inferred from homology"/>
<accession>Q2IJI0</accession>